<name>NUBP2_MONBE</name>
<gene>
    <name type="ORF">33756</name>
</gene>
<sequence>MAAPNEFYETLKQRLAGVKHIVLVLSGKGGVGKSTVASQMAIGLIHRGLKVGLLDIDLTGPSIPTMFGVADQQVHTSSEGWVPLYKYDQRLAIMSIGFLLDSRDEAVIWRGPKKNAMIQQFLSEVCWDELDCLVVDTPPGTSDEHLSIVDALKLCKPDGAILVTTPQGVALSDVRREAEFCRKARLKVLGVVENMSGFACPHCKDCTNLFSKGGGEKLAQEIAAPFLGAIPIDPMLGQSLSRGEDFLASCQAAPSYEAVAALIDPLMAQLGLVQATADTSTPSH</sequence>
<dbReference type="EMBL" id="CH991565">
    <property type="protein sequence ID" value="EDQ86547.1"/>
    <property type="molecule type" value="Genomic_DNA"/>
</dbReference>
<dbReference type="RefSeq" id="XP_001748660.1">
    <property type="nucleotide sequence ID" value="XM_001748608.1"/>
</dbReference>
<dbReference type="SMR" id="A9V7A1"/>
<dbReference type="FunCoup" id="A9V7A1">
    <property type="interactions" value="415"/>
</dbReference>
<dbReference type="STRING" id="81824.A9V7A1"/>
<dbReference type="EnsemblProtists" id="EDQ86547">
    <property type="protein sequence ID" value="EDQ86547"/>
    <property type="gene ID" value="MONBRDRAFT_33756"/>
</dbReference>
<dbReference type="KEGG" id="mbr:MONBRDRAFT_33756"/>
<dbReference type="eggNOG" id="KOG3022">
    <property type="taxonomic scope" value="Eukaryota"/>
</dbReference>
<dbReference type="InParanoid" id="A9V7A1"/>
<dbReference type="OMA" id="WIPVFAD"/>
<dbReference type="Proteomes" id="UP000001357">
    <property type="component" value="Unassembled WGS sequence"/>
</dbReference>
<dbReference type="GO" id="GO:0005829">
    <property type="term" value="C:cytosol"/>
    <property type="evidence" value="ECO:0000318"/>
    <property type="project" value="GO_Central"/>
</dbReference>
<dbReference type="GO" id="GO:0051539">
    <property type="term" value="F:4 iron, 4 sulfur cluster binding"/>
    <property type="evidence" value="ECO:0007669"/>
    <property type="project" value="UniProtKB-UniRule"/>
</dbReference>
<dbReference type="GO" id="GO:0005524">
    <property type="term" value="F:ATP binding"/>
    <property type="evidence" value="ECO:0007669"/>
    <property type="project" value="UniProtKB-KW"/>
</dbReference>
<dbReference type="GO" id="GO:0140663">
    <property type="term" value="F:ATP-dependent FeS chaperone activity"/>
    <property type="evidence" value="ECO:0007669"/>
    <property type="project" value="InterPro"/>
</dbReference>
<dbReference type="GO" id="GO:0051536">
    <property type="term" value="F:iron-sulfur cluster binding"/>
    <property type="evidence" value="ECO:0000318"/>
    <property type="project" value="GO_Central"/>
</dbReference>
<dbReference type="GO" id="GO:0046872">
    <property type="term" value="F:metal ion binding"/>
    <property type="evidence" value="ECO:0007669"/>
    <property type="project" value="UniProtKB-KW"/>
</dbReference>
<dbReference type="GO" id="GO:0016226">
    <property type="term" value="P:iron-sulfur cluster assembly"/>
    <property type="evidence" value="ECO:0000318"/>
    <property type="project" value="GO_Central"/>
</dbReference>
<dbReference type="CDD" id="cd02037">
    <property type="entry name" value="Mrp_NBP35"/>
    <property type="match status" value="1"/>
</dbReference>
<dbReference type="FunFam" id="3.40.50.300:FF:002604">
    <property type="entry name" value="Cytosolic Fe-S cluster assembly factor NUBP2 homolog"/>
    <property type="match status" value="1"/>
</dbReference>
<dbReference type="Gene3D" id="3.40.50.300">
    <property type="entry name" value="P-loop containing nucleotide triphosphate hydrolases"/>
    <property type="match status" value="1"/>
</dbReference>
<dbReference type="HAMAP" id="MF_02040">
    <property type="entry name" value="Mrp_NBP35"/>
    <property type="match status" value="1"/>
</dbReference>
<dbReference type="HAMAP" id="MF_03039">
    <property type="entry name" value="NUBP2"/>
    <property type="match status" value="1"/>
</dbReference>
<dbReference type="InterPro" id="IPR019591">
    <property type="entry name" value="Mrp/NBP35_ATP-bd"/>
</dbReference>
<dbReference type="InterPro" id="IPR028600">
    <property type="entry name" value="NUBP2/Cfd1_eukaryotes"/>
</dbReference>
<dbReference type="InterPro" id="IPR027417">
    <property type="entry name" value="P-loop_NTPase"/>
</dbReference>
<dbReference type="InterPro" id="IPR033756">
    <property type="entry name" value="YlxH/NBP35"/>
</dbReference>
<dbReference type="PANTHER" id="PTHR23264:SF19">
    <property type="entry name" value="CYTOSOLIC FE-S CLUSTER ASSEMBLY FACTOR NUBP2"/>
    <property type="match status" value="1"/>
</dbReference>
<dbReference type="PANTHER" id="PTHR23264">
    <property type="entry name" value="NUCLEOTIDE-BINDING PROTEIN NBP35 YEAST -RELATED"/>
    <property type="match status" value="1"/>
</dbReference>
<dbReference type="Pfam" id="PF10609">
    <property type="entry name" value="ParA"/>
    <property type="match status" value="1"/>
</dbReference>
<dbReference type="SUPFAM" id="SSF52540">
    <property type="entry name" value="P-loop containing nucleoside triphosphate hydrolases"/>
    <property type="match status" value="1"/>
</dbReference>
<feature type="chain" id="PRO_0000382723" description="Cytosolic Fe-S cluster assembly factor NUBP2 homolog">
    <location>
        <begin position="1"/>
        <end position="284"/>
    </location>
</feature>
<feature type="binding site" evidence="1">
    <location>
        <begin position="27"/>
        <end position="34"/>
    </location>
    <ligand>
        <name>ATP</name>
        <dbReference type="ChEBI" id="CHEBI:30616"/>
    </ligand>
</feature>
<feature type="binding site" evidence="1">
    <location>
        <position position="200"/>
    </location>
    <ligand>
        <name>[4Fe-4S] cluster</name>
        <dbReference type="ChEBI" id="CHEBI:49883"/>
        <note>ligand shared between dimeric partners</note>
    </ligand>
</feature>
<feature type="binding site" evidence="1">
    <location>
        <position position="203"/>
    </location>
    <ligand>
        <name>[4Fe-4S] cluster</name>
        <dbReference type="ChEBI" id="CHEBI:49883"/>
        <note>ligand shared between dimeric partners</note>
    </ligand>
</feature>
<evidence type="ECO:0000255" key="1">
    <source>
        <dbReference type="HAMAP-Rule" id="MF_03039"/>
    </source>
</evidence>
<keyword id="KW-0004">4Fe-4S</keyword>
<keyword id="KW-0067">ATP-binding</keyword>
<keyword id="KW-0963">Cytoplasm</keyword>
<keyword id="KW-0408">Iron</keyword>
<keyword id="KW-0411">Iron-sulfur</keyword>
<keyword id="KW-0479">Metal-binding</keyword>
<keyword id="KW-0547">Nucleotide-binding</keyword>
<keyword id="KW-1185">Reference proteome</keyword>
<comment type="function">
    <text evidence="1">Component of the cytosolic iron-sulfur (Fe/S) protein assembly (CIA) machinery. Required for maturation of extramitochondrial Fe-S proteins. The NUBP1-NUBP2 heterotetramer forms a Fe-S scaffold complex, mediating the de novo assembly of an Fe-S cluster and its transfer to target apoproteins.</text>
</comment>
<comment type="cofactor">
    <cofactor evidence="1">
        <name>[4Fe-4S] cluster</name>
        <dbReference type="ChEBI" id="CHEBI:49883"/>
    </cofactor>
    <text evidence="1">Binds 4 [4Fe-4S] clusters per heterotetramer. Contains two stable clusters in the N-termini of NUBP1 and two labile, bridging clusters between subunits of the NUBP1-NUBP2 heterotetramer.</text>
</comment>
<comment type="subunit">
    <text evidence="1">Heterotetramer of 2 NUBP1 and 2 NUBP2 chains.</text>
</comment>
<comment type="subcellular location">
    <subcellularLocation>
        <location evidence="1">Cytoplasm</location>
    </subcellularLocation>
</comment>
<comment type="similarity">
    <text evidence="1">Belongs to the Mrp/NBP35 ATP-binding proteins family. NUBP2/CFD1 subfamily.</text>
</comment>
<organism>
    <name type="scientific">Monosiga brevicollis</name>
    <name type="common">Choanoflagellate</name>
    <dbReference type="NCBI Taxonomy" id="81824"/>
    <lineage>
        <taxon>Eukaryota</taxon>
        <taxon>Choanoflagellata</taxon>
        <taxon>Craspedida</taxon>
        <taxon>Salpingoecidae</taxon>
        <taxon>Monosiga</taxon>
    </lineage>
</organism>
<accession>A9V7A1</accession>
<proteinExistence type="inferred from homology"/>
<reference key="1">
    <citation type="journal article" date="2008" name="Nature">
        <title>The genome of the choanoflagellate Monosiga brevicollis and the origin of metazoans.</title>
        <authorList>
            <consortium name="JGI Sequencing"/>
            <person name="King N."/>
            <person name="Westbrook M.J."/>
            <person name="Young S.L."/>
            <person name="Kuo A."/>
            <person name="Abedin M."/>
            <person name="Chapman J."/>
            <person name="Fairclough S."/>
            <person name="Hellsten U."/>
            <person name="Isogai Y."/>
            <person name="Letunic I."/>
            <person name="Marr M."/>
            <person name="Pincus D."/>
            <person name="Putnam N."/>
            <person name="Rokas A."/>
            <person name="Wright K.J."/>
            <person name="Zuzow R."/>
            <person name="Dirks W."/>
            <person name="Good M."/>
            <person name="Goodstein D."/>
            <person name="Lemons D."/>
            <person name="Li W."/>
            <person name="Lyons J.B."/>
            <person name="Morris A."/>
            <person name="Nichols S."/>
            <person name="Richter D.J."/>
            <person name="Salamov A."/>
            <person name="Bork P."/>
            <person name="Lim W.A."/>
            <person name="Manning G."/>
            <person name="Miller W.T."/>
            <person name="McGinnis W."/>
            <person name="Shapiro H."/>
            <person name="Tjian R."/>
            <person name="Grigoriev I.V."/>
            <person name="Rokhsar D."/>
        </authorList>
    </citation>
    <scope>NUCLEOTIDE SEQUENCE [LARGE SCALE GENOMIC DNA]</scope>
    <source>
        <strain>MX1 / ATCC 50154</strain>
    </source>
</reference>
<protein>
    <recommendedName>
        <fullName evidence="1">Cytosolic Fe-S cluster assembly factor NUBP2 homolog</fullName>
    </recommendedName>
</protein>